<dbReference type="EMBL" id="CP001280">
    <property type="protein sequence ID" value="ACK51229.1"/>
    <property type="molecule type" value="Genomic_DNA"/>
</dbReference>
<dbReference type="SMR" id="B8EIB0"/>
<dbReference type="STRING" id="395965.Msil_2298"/>
<dbReference type="KEGG" id="msl:Msil_2298"/>
<dbReference type="eggNOG" id="COG0779">
    <property type="taxonomic scope" value="Bacteria"/>
</dbReference>
<dbReference type="HOGENOM" id="CLU_070525_0_0_5"/>
<dbReference type="Proteomes" id="UP000002257">
    <property type="component" value="Chromosome"/>
</dbReference>
<dbReference type="GO" id="GO:0005829">
    <property type="term" value="C:cytosol"/>
    <property type="evidence" value="ECO:0007669"/>
    <property type="project" value="TreeGrafter"/>
</dbReference>
<dbReference type="GO" id="GO:0000028">
    <property type="term" value="P:ribosomal small subunit assembly"/>
    <property type="evidence" value="ECO:0007669"/>
    <property type="project" value="TreeGrafter"/>
</dbReference>
<dbReference type="GO" id="GO:0006412">
    <property type="term" value="P:translation"/>
    <property type="evidence" value="ECO:0007669"/>
    <property type="project" value="TreeGrafter"/>
</dbReference>
<dbReference type="CDD" id="cd01734">
    <property type="entry name" value="YlxS_C"/>
    <property type="match status" value="1"/>
</dbReference>
<dbReference type="Gene3D" id="3.30.300.70">
    <property type="entry name" value="RimP-like superfamily, N-terminal"/>
    <property type="match status" value="1"/>
</dbReference>
<dbReference type="HAMAP" id="MF_01077">
    <property type="entry name" value="RimP"/>
    <property type="match status" value="1"/>
</dbReference>
<dbReference type="InterPro" id="IPR003728">
    <property type="entry name" value="Ribosome_maturation_RimP"/>
</dbReference>
<dbReference type="InterPro" id="IPR028998">
    <property type="entry name" value="RimP_C"/>
</dbReference>
<dbReference type="InterPro" id="IPR036847">
    <property type="entry name" value="RimP_C_sf"/>
</dbReference>
<dbReference type="InterPro" id="IPR028989">
    <property type="entry name" value="RimP_N"/>
</dbReference>
<dbReference type="InterPro" id="IPR035956">
    <property type="entry name" value="RimP_N_sf"/>
</dbReference>
<dbReference type="NCBIfam" id="NF000932">
    <property type="entry name" value="PRK00092.2-5"/>
    <property type="match status" value="1"/>
</dbReference>
<dbReference type="PANTHER" id="PTHR33867">
    <property type="entry name" value="RIBOSOME MATURATION FACTOR RIMP"/>
    <property type="match status" value="1"/>
</dbReference>
<dbReference type="PANTHER" id="PTHR33867:SF1">
    <property type="entry name" value="RIBOSOME MATURATION FACTOR RIMP"/>
    <property type="match status" value="1"/>
</dbReference>
<dbReference type="Pfam" id="PF17384">
    <property type="entry name" value="DUF150_C"/>
    <property type="match status" value="1"/>
</dbReference>
<dbReference type="Pfam" id="PF02576">
    <property type="entry name" value="RimP_N"/>
    <property type="match status" value="1"/>
</dbReference>
<dbReference type="SUPFAM" id="SSF74942">
    <property type="entry name" value="YhbC-like, C-terminal domain"/>
    <property type="match status" value="1"/>
</dbReference>
<dbReference type="SUPFAM" id="SSF75420">
    <property type="entry name" value="YhbC-like, N-terminal domain"/>
    <property type="match status" value="1"/>
</dbReference>
<feature type="chain" id="PRO_0000384707" description="Ribosome maturation factor RimP">
    <location>
        <begin position="1"/>
        <end position="279"/>
    </location>
</feature>
<feature type="region of interest" description="Disordered" evidence="2">
    <location>
        <begin position="197"/>
        <end position="279"/>
    </location>
</feature>
<feature type="compositionally biased region" description="Acidic residues" evidence="2">
    <location>
        <begin position="199"/>
        <end position="210"/>
    </location>
</feature>
<protein>
    <recommendedName>
        <fullName evidence="1">Ribosome maturation factor RimP</fullName>
    </recommendedName>
</protein>
<reference key="1">
    <citation type="journal article" date="2010" name="J. Bacteriol.">
        <title>Complete genome sequence of the aerobic facultative methanotroph Methylocella silvestris BL2.</title>
        <authorList>
            <person name="Chen Y."/>
            <person name="Crombie A."/>
            <person name="Rahman M.T."/>
            <person name="Dedysh S.N."/>
            <person name="Liesack W."/>
            <person name="Stott M.B."/>
            <person name="Alam M."/>
            <person name="Theisen A.R."/>
            <person name="Murrell J.C."/>
            <person name="Dunfield P.F."/>
        </authorList>
    </citation>
    <scope>NUCLEOTIDE SEQUENCE [LARGE SCALE GENOMIC DNA]</scope>
    <source>
        <strain>DSM 15510 / CIP 108128 / LMG 27833 / NCIMB 13906 / BL2</strain>
    </source>
</reference>
<organism>
    <name type="scientific">Methylocella silvestris (strain DSM 15510 / CIP 108128 / LMG 27833 / NCIMB 13906 / BL2)</name>
    <dbReference type="NCBI Taxonomy" id="395965"/>
    <lineage>
        <taxon>Bacteria</taxon>
        <taxon>Pseudomonadati</taxon>
        <taxon>Pseudomonadota</taxon>
        <taxon>Alphaproteobacteria</taxon>
        <taxon>Hyphomicrobiales</taxon>
        <taxon>Beijerinckiaceae</taxon>
        <taxon>Methylocella</taxon>
    </lineage>
</organism>
<sequence length="279" mass="29324">MGNATQVETDSAALMAEPRLVAETGVAARIAHIATPVLADLGYRLVRVKLSAQDGMTVQIMAERPDGAMTVNDCEAVSAALSPALDVEDVVKQAYRLEISSPGIDRPLVRVSDFRRALDQEARIELRLGLDGRKRFRGLIKGVTGAGAAAVVTLERVDAKPGEAVEAVLPLDDLAEAKLVLTEELIRAALRAAKAALAEEGEPEEQEEGGGEAAPAGKAERGPGRFTPKPAKAKSAQGKPVKAKPVLPAGVKTQFKQLKSGRLQGLAREGAPALRPTPK</sequence>
<proteinExistence type="inferred from homology"/>
<name>RIMP_METSB</name>
<keyword id="KW-0963">Cytoplasm</keyword>
<keyword id="KW-1185">Reference proteome</keyword>
<keyword id="KW-0690">Ribosome biogenesis</keyword>
<evidence type="ECO:0000255" key="1">
    <source>
        <dbReference type="HAMAP-Rule" id="MF_01077"/>
    </source>
</evidence>
<evidence type="ECO:0000256" key="2">
    <source>
        <dbReference type="SAM" id="MobiDB-lite"/>
    </source>
</evidence>
<comment type="function">
    <text evidence="1">Required for maturation of 30S ribosomal subunits.</text>
</comment>
<comment type="subcellular location">
    <subcellularLocation>
        <location evidence="1">Cytoplasm</location>
    </subcellularLocation>
</comment>
<comment type="similarity">
    <text evidence="1">Belongs to the RimP family.</text>
</comment>
<accession>B8EIB0</accession>
<gene>
    <name evidence="1" type="primary">rimP</name>
    <name type="ordered locus">Msil_2298</name>
</gene>